<evidence type="ECO:0000255" key="1">
    <source>
        <dbReference type="HAMAP-Rule" id="MF_00421"/>
    </source>
</evidence>
<gene>
    <name evidence="1" type="primary">purQ</name>
    <name type="ordered locus">OB0744</name>
</gene>
<feature type="chain" id="PRO_0000100574" description="Phosphoribosylformylglycinamidine synthase subunit PurQ">
    <location>
        <begin position="1"/>
        <end position="228"/>
    </location>
</feature>
<feature type="domain" description="Glutamine amidotransferase type-1" evidence="1">
    <location>
        <begin position="3"/>
        <end position="226"/>
    </location>
</feature>
<feature type="active site" description="Nucleophile" evidence="1">
    <location>
        <position position="87"/>
    </location>
</feature>
<feature type="active site" evidence="1">
    <location>
        <position position="195"/>
    </location>
</feature>
<feature type="active site" evidence="1">
    <location>
        <position position="197"/>
    </location>
</feature>
<accession>Q8ES97</accession>
<comment type="function">
    <text evidence="1">Part of the phosphoribosylformylglycinamidine synthase complex involved in the purines biosynthetic pathway. Catalyzes the ATP-dependent conversion of formylglycinamide ribonucleotide (FGAR) and glutamine to yield formylglycinamidine ribonucleotide (FGAM) and glutamate. The FGAM synthase complex is composed of three subunits. PurQ produces an ammonia molecule by converting glutamine to glutamate. PurL transfers the ammonia molecule to FGAR to form FGAM in an ATP-dependent manner. PurS interacts with PurQ and PurL and is thought to assist in the transfer of the ammonia molecule from PurQ to PurL.</text>
</comment>
<comment type="catalytic activity">
    <reaction evidence="1">
        <text>N(2)-formyl-N(1)-(5-phospho-beta-D-ribosyl)glycinamide + L-glutamine + ATP + H2O = 2-formamido-N(1)-(5-O-phospho-beta-D-ribosyl)acetamidine + L-glutamate + ADP + phosphate + H(+)</text>
        <dbReference type="Rhea" id="RHEA:17129"/>
        <dbReference type="ChEBI" id="CHEBI:15377"/>
        <dbReference type="ChEBI" id="CHEBI:15378"/>
        <dbReference type="ChEBI" id="CHEBI:29985"/>
        <dbReference type="ChEBI" id="CHEBI:30616"/>
        <dbReference type="ChEBI" id="CHEBI:43474"/>
        <dbReference type="ChEBI" id="CHEBI:58359"/>
        <dbReference type="ChEBI" id="CHEBI:147286"/>
        <dbReference type="ChEBI" id="CHEBI:147287"/>
        <dbReference type="ChEBI" id="CHEBI:456216"/>
        <dbReference type="EC" id="6.3.5.3"/>
    </reaction>
</comment>
<comment type="catalytic activity">
    <reaction evidence="1">
        <text>L-glutamine + H2O = L-glutamate + NH4(+)</text>
        <dbReference type="Rhea" id="RHEA:15889"/>
        <dbReference type="ChEBI" id="CHEBI:15377"/>
        <dbReference type="ChEBI" id="CHEBI:28938"/>
        <dbReference type="ChEBI" id="CHEBI:29985"/>
        <dbReference type="ChEBI" id="CHEBI:58359"/>
        <dbReference type="EC" id="3.5.1.2"/>
    </reaction>
</comment>
<comment type="pathway">
    <text evidence="1">Purine metabolism; IMP biosynthesis via de novo pathway; 5-amino-1-(5-phospho-D-ribosyl)imidazole from N(2)-formyl-N(1)-(5-phospho-D-ribosyl)glycinamide: step 1/2.</text>
</comment>
<comment type="subunit">
    <text evidence="1">Part of the FGAM synthase complex composed of 1 PurL, 1 PurQ and 2 PurS subunits.</text>
</comment>
<comment type="subcellular location">
    <subcellularLocation>
        <location evidence="1">Cytoplasm</location>
    </subcellularLocation>
</comment>
<protein>
    <recommendedName>
        <fullName evidence="1">Phosphoribosylformylglycinamidine synthase subunit PurQ</fullName>
        <shortName evidence="1">FGAM synthase</shortName>
        <ecNumber evidence="1">6.3.5.3</ecNumber>
    </recommendedName>
    <alternativeName>
        <fullName evidence="1">Formylglycinamide ribonucleotide amidotransferase subunit I</fullName>
        <shortName evidence="1">FGAR amidotransferase I</shortName>
        <shortName evidence="1">FGAR-AT I</shortName>
    </alternativeName>
    <alternativeName>
        <fullName evidence="1">Glutaminase PurQ</fullName>
        <ecNumber evidence="1">3.5.1.2</ecNumber>
    </alternativeName>
    <alternativeName>
        <fullName evidence="1">Phosphoribosylformylglycinamidine synthase subunit I</fullName>
    </alternativeName>
</protein>
<sequence length="228" mass="25303">MKFAVIVFPGSNCDRDMYHAVKEVAGAEAELVWYTETDKLEGVDGILLPGGFSYGDYLRSGSMASTSDVMHKIREHAAKGKPVLGVCNGFQILTESGLLPGALMRNKHLSFMCHQEELVVEDNQTFFTSLYEKKEVVRFPIAHGEGSYFCDEATLKELQANNQIVFTYKNNPNGSIENIAGIRNKQGNVLGMMPHPERAVEELLGSDDGLKLFKSMIANWRDSYAINA</sequence>
<keyword id="KW-0067">ATP-binding</keyword>
<keyword id="KW-0963">Cytoplasm</keyword>
<keyword id="KW-0315">Glutamine amidotransferase</keyword>
<keyword id="KW-0378">Hydrolase</keyword>
<keyword id="KW-0436">Ligase</keyword>
<keyword id="KW-0547">Nucleotide-binding</keyword>
<keyword id="KW-0658">Purine biosynthesis</keyword>
<keyword id="KW-1185">Reference proteome</keyword>
<name>PURQ_OCEIH</name>
<reference key="1">
    <citation type="journal article" date="2002" name="Nucleic Acids Res.">
        <title>Genome sequence of Oceanobacillus iheyensis isolated from the Iheya Ridge and its unexpected adaptive capabilities to extreme environments.</title>
        <authorList>
            <person name="Takami H."/>
            <person name="Takaki Y."/>
            <person name="Uchiyama I."/>
        </authorList>
    </citation>
    <scope>NUCLEOTIDE SEQUENCE [LARGE SCALE GENOMIC DNA]</scope>
    <source>
        <strain>DSM 14371 / CIP 107618 / JCM 11309 / KCTC 3954 / HTE831</strain>
    </source>
</reference>
<proteinExistence type="inferred from homology"/>
<organism>
    <name type="scientific">Oceanobacillus iheyensis (strain DSM 14371 / CIP 107618 / JCM 11309 / KCTC 3954 / HTE831)</name>
    <dbReference type="NCBI Taxonomy" id="221109"/>
    <lineage>
        <taxon>Bacteria</taxon>
        <taxon>Bacillati</taxon>
        <taxon>Bacillota</taxon>
        <taxon>Bacilli</taxon>
        <taxon>Bacillales</taxon>
        <taxon>Bacillaceae</taxon>
        <taxon>Oceanobacillus</taxon>
    </lineage>
</organism>
<dbReference type="EC" id="6.3.5.3" evidence="1"/>
<dbReference type="EC" id="3.5.1.2" evidence="1"/>
<dbReference type="EMBL" id="BA000028">
    <property type="protein sequence ID" value="BAC12700.1"/>
    <property type="molecule type" value="Genomic_DNA"/>
</dbReference>
<dbReference type="RefSeq" id="WP_011065152.1">
    <property type="nucleotide sequence ID" value="NC_004193.1"/>
</dbReference>
<dbReference type="SMR" id="Q8ES97"/>
<dbReference type="STRING" id="221109.gene:10732965"/>
<dbReference type="KEGG" id="oih:OB0744"/>
<dbReference type="eggNOG" id="COG0047">
    <property type="taxonomic scope" value="Bacteria"/>
</dbReference>
<dbReference type="HOGENOM" id="CLU_001031_3_1_9"/>
<dbReference type="OrthoDB" id="9804441at2"/>
<dbReference type="PhylomeDB" id="Q8ES97"/>
<dbReference type="UniPathway" id="UPA00074">
    <property type="reaction ID" value="UER00128"/>
</dbReference>
<dbReference type="Proteomes" id="UP000000822">
    <property type="component" value="Chromosome"/>
</dbReference>
<dbReference type="GO" id="GO:0005737">
    <property type="term" value="C:cytoplasm"/>
    <property type="evidence" value="ECO:0007669"/>
    <property type="project" value="UniProtKB-SubCell"/>
</dbReference>
<dbReference type="GO" id="GO:0005524">
    <property type="term" value="F:ATP binding"/>
    <property type="evidence" value="ECO:0007669"/>
    <property type="project" value="UniProtKB-KW"/>
</dbReference>
<dbReference type="GO" id="GO:0004359">
    <property type="term" value="F:glutaminase activity"/>
    <property type="evidence" value="ECO:0007669"/>
    <property type="project" value="UniProtKB-EC"/>
</dbReference>
<dbReference type="GO" id="GO:0004642">
    <property type="term" value="F:phosphoribosylformylglycinamidine synthase activity"/>
    <property type="evidence" value="ECO:0007669"/>
    <property type="project" value="UniProtKB-UniRule"/>
</dbReference>
<dbReference type="GO" id="GO:0006189">
    <property type="term" value="P:'de novo' IMP biosynthetic process"/>
    <property type="evidence" value="ECO:0007669"/>
    <property type="project" value="UniProtKB-UniRule"/>
</dbReference>
<dbReference type="CDD" id="cd01740">
    <property type="entry name" value="GATase1_FGAR_AT"/>
    <property type="match status" value="1"/>
</dbReference>
<dbReference type="FunFam" id="3.40.50.880:FF:000019">
    <property type="entry name" value="Phosphoribosylformylglycinamidine synthase subunit PurQ"/>
    <property type="match status" value="1"/>
</dbReference>
<dbReference type="Gene3D" id="3.40.50.880">
    <property type="match status" value="1"/>
</dbReference>
<dbReference type="HAMAP" id="MF_00421">
    <property type="entry name" value="PurQ"/>
    <property type="match status" value="1"/>
</dbReference>
<dbReference type="InterPro" id="IPR029062">
    <property type="entry name" value="Class_I_gatase-like"/>
</dbReference>
<dbReference type="InterPro" id="IPR010075">
    <property type="entry name" value="PRibForGlyAmidine_synth_PurQ"/>
</dbReference>
<dbReference type="NCBIfam" id="TIGR01737">
    <property type="entry name" value="FGAM_synth_I"/>
    <property type="match status" value="1"/>
</dbReference>
<dbReference type="NCBIfam" id="NF002957">
    <property type="entry name" value="PRK03619.1"/>
    <property type="match status" value="1"/>
</dbReference>
<dbReference type="PANTHER" id="PTHR47552">
    <property type="entry name" value="PHOSPHORIBOSYLFORMYLGLYCINAMIDINE SYNTHASE SUBUNIT PURQ"/>
    <property type="match status" value="1"/>
</dbReference>
<dbReference type="PANTHER" id="PTHR47552:SF1">
    <property type="entry name" value="PHOSPHORIBOSYLFORMYLGLYCINAMIDINE SYNTHASE SUBUNIT PURQ"/>
    <property type="match status" value="1"/>
</dbReference>
<dbReference type="Pfam" id="PF13507">
    <property type="entry name" value="GATase_5"/>
    <property type="match status" value="1"/>
</dbReference>
<dbReference type="PIRSF" id="PIRSF001586">
    <property type="entry name" value="FGAM_synth_I"/>
    <property type="match status" value="1"/>
</dbReference>
<dbReference type="SMART" id="SM01211">
    <property type="entry name" value="GATase_5"/>
    <property type="match status" value="1"/>
</dbReference>
<dbReference type="SUPFAM" id="SSF52317">
    <property type="entry name" value="Class I glutamine amidotransferase-like"/>
    <property type="match status" value="1"/>
</dbReference>
<dbReference type="PROSITE" id="PS51273">
    <property type="entry name" value="GATASE_TYPE_1"/>
    <property type="match status" value="1"/>
</dbReference>